<evidence type="ECO:0000250" key="1"/>
<evidence type="ECO:0000255" key="2"/>
<evidence type="ECO:0000255" key="3">
    <source>
        <dbReference type="PROSITE-ProRule" id="PRU00174"/>
    </source>
</evidence>
<evidence type="ECO:0000269" key="4">
    <source>
    </source>
</evidence>
<evidence type="ECO:0000269" key="5">
    <source>
    </source>
</evidence>
<evidence type="ECO:0000305" key="6"/>
<sequence>MIQGLESIMNQGTKRILLAATLAATPWQVYGSIEQPSLLPTPPMGFNNWARFMCDLNETLFTETADTMAANGLRDAGYNRINLDDCWMAYQRSDNGSLQWNTTKFPHGLPWLAKYVKAKGFHFGIYEDSGNMTCGGYPGSYNHEEQDANTFASWGIDYLKLDGCNVYATQGRTLEEEYKQRYGHWHQVLSKMQHPLIFSESAPAYFAGTDNNTDWYTVMDWVPIYGELARHSTDILVYSGAGSAWDSIMNNYNYNTLLARYQRPGYFNDPDFLIPDHPGLTADEKRSHFALWASFSAPLIISAYIPALSKDEIAFLTNEALIAVNQDPLAQQATLASRDDTLDILTRSLANGDRLLTVLNKGNTTVTRDIPVQWLGLTETDCTYTAEDLWDGKTQKISDHIKIELASHATAVFRLSLPQGCSSVVPTGLVFNTASGNCLTAASNSSVAFQSCNGETSQIWQVTPSGVIRPVSQTTQCLAADGNLVKLQACDSTDSDGQKWTYPVTGNLKNAKTDGCLTEGSVQMKSCLYERDGQVFGLPSGVQLA</sequence>
<comment type="function">
    <text>Hydrolyzes a variety of simple alpha-D-galactoside as well as more complex molecules such as oligosaccharides and polysaccharides.</text>
</comment>
<comment type="catalytic activity">
    <reaction>
        <text>Hydrolysis of terminal, non-reducing alpha-D-galactose residues in alpha-D-galactosides, including galactose oligosaccharides, galactomannans and galactolipids.</text>
        <dbReference type="EC" id="3.2.1.22"/>
    </reaction>
</comment>
<comment type="subcellular location">
    <subcellularLocation>
        <location>Secreted</location>
    </subcellularLocation>
</comment>
<comment type="induction">
    <text evidence="4">Expressed on galactose and galactosecontaining oligosaccharides (lactose, melibiose, raffinose, and stachyose) and polysaccharides (pectin, xylan, gum arabic, gum karaya, and locust bean gum).</text>
</comment>
<comment type="PTM">
    <text>A C-terminal Ser/Thr-rich region may provide possible sites for O-glycosylation.</text>
</comment>
<comment type="similarity">
    <text evidence="6">Belongs to the glycosyl hydrolase 27 family.</text>
</comment>
<comment type="caution">
    <text evidence="6">It is uncertain whether Met-1 or Met-9 is the initiator.</text>
</comment>
<dbReference type="EC" id="3.2.1.22"/>
<dbReference type="EMBL" id="X63348">
    <property type="protein sequence ID" value="CAA44950.1"/>
    <property type="molecule type" value="Genomic_DNA"/>
</dbReference>
<dbReference type="PIR" id="S23582">
    <property type="entry name" value="S23582"/>
</dbReference>
<dbReference type="SMR" id="P28351"/>
<dbReference type="CAZy" id="CBM13">
    <property type="family name" value="Carbohydrate-Binding Module Family 13"/>
</dbReference>
<dbReference type="CAZy" id="GH27">
    <property type="family name" value="Glycoside Hydrolase Family 27"/>
</dbReference>
<dbReference type="GlyConnect" id="42">
    <property type="glycosylation" value="6 N-Linked glycans"/>
</dbReference>
<dbReference type="GlyCosmos" id="P28351">
    <property type="glycosylation" value="7 sites, 9 glycans"/>
</dbReference>
<dbReference type="PaxDb" id="5061-CADANGAP00004923"/>
<dbReference type="VEuPathDB" id="FungiDB:An06g00170"/>
<dbReference type="VEuPathDB" id="FungiDB:ASPNIDRAFT2_1114396"/>
<dbReference type="VEuPathDB" id="FungiDB:ATCC64974_96720"/>
<dbReference type="VEuPathDB" id="FungiDB:M747DRAFT_296456"/>
<dbReference type="eggNOG" id="KOG2366">
    <property type="taxonomic scope" value="Eukaryota"/>
</dbReference>
<dbReference type="GO" id="GO:0005576">
    <property type="term" value="C:extracellular region"/>
    <property type="evidence" value="ECO:0007669"/>
    <property type="project" value="UniProtKB-SubCell"/>
</dbReference>
<dbReference type="GO" id="GO:0004557">
    <property type="term" value="F:alpha-galactosidase activity"/>
    <property type="evidence" value="ECO:0007669"/>
    <property type="project" value="UniProtKB-EC"/>
</dbReference>
<dbReference type="GO" id="GO:0030246">
    <property type="term" value="F:carbohydrate binding"/>
    <property type="evidence" value="ECO:0007669"/>
    <property type="project" value="UniProtKB-KW"/>
</dbReference>
<dbReference type="GO" id="GO:0005975">
    <property type="term" value="P:carbohydrate metabolic process"/>
    <property type="evidence" value="ECO:0007669"/>
    <property type="project" value="InterPro"/>
</dbReference>
<dbReference type="CDD" id="cd23425">
    <property type="entry name" value="beta-trefoil_Ricin_AglA"/>
    <property type="match status" value="1"/>
</dbReference>
<dbReference type="CDD" id="cd14792">
    <property type="entry name" value="GH27"/>
    <property type="match status" value="1"/>
</dbReference>
<dbReference type="FunFam" id="3.20.20.70:FF:000177">
    <property type="entry name" value="Alpha-galactosidase"/>
    <property type="match status" value="1"/>
</dbReference>
<dbReference type="FunFam" id="2.60.40.1180:FF:000056">
    <property type="entry name" value="Alpha-galactosidase A"/>
    <property type="match status" value="1"/>
</dbReference>
<dbReference type="FunFam" id="2.80.10.50:FF:000077">
    <property type="entry name" value="Alpha-galactosidase A"/>
    <property type="match status" value="1"/>
</dbReference>
<dbReference type="Gene3D" id="2.80.10.50">
    <property type="match status" value="1"/>
</dbReference>
<dbReference type="Gene3D" id="3.20.20.70">
    <property type="entry name" value="Aldolase class I"/>
    <property type="match status" value="1"/>
</dbReference>
<dbReference type="Gene3D" id="2.60.40.1180">
    <property type="entry name" value="Golgi alpha-mannosidase II"/>
    <property type="match status" value="1"/>
</dbReference>
<dbReference type="InterPro" id="IPR013785">
    <property type="entry name" value="Aldolase_TIM"/>
</dbReference>
<dbReference type="InterPro" id="IPR002241">
    <property type="entry name" value="Glyco_hydro_27"/>
</dbReference>
<dbReference type="InterPro" id="IPR000111">
    <property type="entry name" value="Glyco_hydro_27/36_CS"/>
</dbReference>
<dbReference type="InterPro" id="IPR013780">
    <property type="entry name" value="Glyco_hydro_b"/>
</dbReference>
<dbReference type="InterPro" id="IPR017853">
    <property type="entry name" value="Glycoside_hydrolase_SF"/>
</dbReference>
<dbReference type="InterPro" id="IPR041233">
    <property type="entry name" value="Melibiase_C"/>
</dbReference>
<dbReference type="InterPro" id="IPR035992">
    <property type="entry name" value="Ricin_B-like_lectins"/>
</dbReference>
<dbReference type="InterPro" id="IPR000772">
    <property type="entry name" value="Ricin_B_lectin"/>
</dbReference>
<dbReference type="PANTHER" id="PTHR11452:SF91">
    <property type="entry name" value="ALPHA-GALACTOSIDASE A-RELATED"/>
    <property type="match status" value="1"/>
</dbReference>
<dbReference type="PANTHER" id="PTHR11452">
    <property type="entry name" value="ALPHA-GALACTOSIDASE/ALPHA-N-ACETYLGALACTOSAMINIDASE"/>
    <property type="match status" value="1"/>
</dbReference>
<dbReference type="Pfam" id="PF16499">
    <property type="entry name" value="Melibiase_2"/>
    <property type="match status" value="1"/>
</dbReference>
<dbReference type="Pfam" id="PF17801">
    <property type="entry name" value="Melibiase_C"/>
    <property type="match status" value="1"/>
</dbReference>
<dbReference type="Pfam" id="PF00652">
    <property type="entry name" value="Ricin_B_lectin"/>
    <property type="match status" value="1"/>
</dbReference>
<dbReference type="PRINTS" id="PR00740">
    <property type="entry name" value="GLHYDRLASE27"/>
</dbReference>
<dbReference type="SMART" id="SM00458">
    <property type="entry name" value="RICIN"/>
    <property type="match status" value="1"/>
</dbReference>
<dbReference type="SUPFAM" id="SSF51445">
    <property type="entry name" value="(Trans)glycosidases"/>
    <property type="match status" value="1"/>
</dbReference>
<dbReference type="SUPFAM" id="SSF51011">
    <property type="entry name" value="Glycosyl hydrolase domain"/>
    <property type="match status" value="1"/>
</dbReference>
<dbReference type="SUPFAM" id="SSF50370">
    <property type="entry name" value="Ricin B-like lectins"/>
    <property type="match status" value="1"/>
</dbReference>
<dbReference type="PROSITE" id="PS00512">
    <property type="entry name" value="ALPHA_GALACTOSIDASE"/>
    <property type="match status" value="1"/>
</dbReference>
<dbReference type="PROSITE" id="PS50231">
    <property type="entry name" value="RICIN_B_LECTIN"/>
    <property type="match status" value="1"/>
</dbReference>
<reference key="1">
    <citation type="journal article" date="1992" name="Mol. Gen. Genet.">
        <title>Cloning and expression of a member of the Aspergillus niger gene family encoding alpha-galactosidase.</title>
        <authorList>
            <person name="den Herder I.F."/>
            <person name="Rosell A.M.M."/>
            <person name="van Zuilen C.M."/>
            <person name="Punt P.J."/>
            <person name="van den Hondel C.A.M.J.J."/>
        </authorList>
    </citation>
    <scope>NUCLEOTIDE SEQUENCE [GENOMIC DNA]</scope>
    <scope>PROTEIN SEQUENCE OF 32-59</scope>
    <source>
        <strain>ATCC 9089 / N402</strain>
    </source>
</reference>
<reference key="2">
    <citation type="journal article" date="1999" name="Appl. Environ. Microbiol.">
        <title>Differential expression of three alpha-galactosidase genes and a single beta-galactosidase gene from Aspergillus niger.</title>
        <authorList>
            <person name="de Vries R.P."/>
            <person name="van den Broeck H.C."/>
            <person name="Dekkers E."/>
            <person name="Manzanares P."/>
            <person name="de Graaff L.H."/>
            <person name="Visser J."/>
        </authorList>
    </citation>
    <scope>INDUCTION</scope>
</reference>
<feature type="signal peptide" evidence="5">
    <location>
        <begin position="1"/>
        <end position="31"/>
    </location>
</feature>
<feature type="chain" id="PRO_0000000999" description="Alpha-galactosidase A">
    <location>
        <begin position="32"/>
        <end position="545"/>
    </location>
</feature>
<feature type="domain" description="Ricin B-type lectin" evidence="3">
    <location>
        <begin position="421"/>
        <end position="518"/>
    </location>
</feature>
<feature type="active site" description="Nucleophile" evidence="1">
    <location>
        <position position="162"/>
    </location>
</feature>
<feature type="active site" description="Proton donor" evidence="1">
    <location>
        <position position="220"/>
    </location>
</feature>
<feature type="glycosylation site" description="N-linked (GlcNAc...) asparagine" evidence="2">
    <location>
        <position position="57"/>
    </location>
</feature>
<feature type="glycosylation site" description="N-linked (GlcNAc...) asparagine" evidence="2">
    <location>
        <position position="95"/>
    </location>
</feature>
<feature type="glycosylation site" description="N-linked (GlcNAc...) asparagine" evidence="2">
    <location>
        <position position="101"/>
    </location>
</feature>
<feature type="glycosylation site" description="N-linked (GlcNAc...) asparagine" evidence="2">
    <location>
        <position position="131"/>
    </location>
</feature>
<feature type="glycosylation site" description="N-linked (GlcNAc...) asparagine" evidence="2">
    <location>
        <position position="211"/>
    </location>
</feature>
<feature type="glycosylation site" description="N-linked (GlcNAc...) asparagine" evidence="2">
    <location>
        <position position="363"/>
    </location>
</feature>
<feature type="glycosylation site" description="N-linked (GlcNAc...) asparagine" evidence="2">
    <location>
        <position position="444"/>
    </location>
</feature>
<feature type="disulfide bond" evidence="3">
    <location>
        <begin position="54"/>
        <end position="86"/>
    </location>
</feature>
<feature type="disulfide bond" evidence="3">
    <location>
        <begin position="134"/>
        <end position="164"/>
    </location>
</feature>
<feature type="disulfide bond" evidence="3">
    <location>
        <begin position="438"/>
        <end position="452"/>
    </location>
</feature>
<feature type="disulfide bond" evidence="3">
    <location>
        <begin position="477"/>
        <end position="490"/>
    </location>
</feature>
<protein>
    <recommendedName>
        <fullName>Alpha-galactosidase A</fullName>
        <ecNumber>3.2.1.22</ecNumber>
    </recommendedName>
    <alternativeName>
        <fullName>Melibiase A</fullName>
    </alternativeName>
</protein>
<accession>P28351</accession>
<name>AGALA_ASPNG</name>
<organism>
    <name type="scientific">Aspergillus niger</name>
    <dbReference type="NCBI Taxonomy" id="5061"/>
    <lineage>
        <taxon>Eukaryota</taxon>
        <taxon>Fungi</taxon>
        <taxon>Dikarya</taxon>
        <taxon>Ascomycota</taxon>
        <taxon>Pezizomycotina</taxon>
        <taxon>Eurotiomycetes</taxon>
        <taxon>Eurotiomycetidae</taxon>
        <taxon>Eurotiales</taxon>
        <taxon>Aspergillaceae</taxon>
        <taxon>Aspergillus</taxon>
        <taxon>Aspergillus subgen. Circumdati</taxon>
    </lineage>
</organism>
<gene>
    <name type="primary">aglA</name>
</gene>
<keyword id="KW-0903">Direct protein sequencing</keyword>
<keyword id="KW-1015">Disulfide bond</keyword>
<keyword id="KW-0325">Glycoprotein</keyword>
<keyword id="KW-0326">Glycosidase</keyword>
<keyword id="KW-0378">Hydrolase</keyword>
<keyword id="KW-0430">Lectin</keyword>
<keyword id="KW-0964">Secreted</keyword>
<keyword id="KW-0732">Signal</keyword>
<proteinExistence type="evidence at protein level"/>